<comment type="function">
    <text evidence="1">NDH-1 shuttles electrons from NADH, via FMN and iron-sulfur (Fe-S) centers, to quinones in the respiratory chain. The immediate electron acceptor for the enzyme in this species is believed to be ubiquinone. Couples the redox reaction to proton translocation (for every two electrons transferred, four hydrogen ions are translocated across the cytoplasmic membrane), and thus conserves the redox energy in a proton gradient.</text>
</comment>
<comment type="catalytic activity">
    <reaction evidence="1">
        <text>a quinone + NADH + 5 H(+)(in) = a quinol + NAD(+) + 4 H(+)(out)</text>
        <dbReference type="Rhea" id="RHEA:57888"/>
        <dbReference type="ChEBI" id="CHEBI:15378"/>
        <dbReference type="ChEBI" id="CHEBI:24646"/>
        <dbReference type="ChEBI" id="CHEBI:57540"/>
        <dbReference type="ChEBI" id="CHEBI:57945"/>
        <dbReference type="ChEBI" id="CHEBI:132124"/>
    </reaction>
</comment>
<comment type="cofactor">
    <cofactor evidence="1">
        <name>[4Fe-4S] cluster</name>
        <dbReference type="ChEBI" id="CHEBI:49883"/>
    </cofactor>
    <text evidence="1">Binds 2 [4Fe-4S] clusters per subunit.</text>
</comment>
<comment type="subunit">
    <text evidence="1">NDH-1 is composed of 14 different subunits. Subunits NuoA, H, J, K, L, M, N constitute the membrane sector of the complex.</text>
</comment>
<comment type="subcellular location">
    <subcellularLocation>
        <location evidence="1">Cell inner membrane</location>
        <topology evidence="1">Peripheral membrane protein</topology>
    </subcellularLocation>
</comment>
<comment type="similarity">
    <text evidence="1">Belongs to the complex I 23 kDa subunit family.</text>
</comment>
<organism>
    <name type="scientific">Chromohalobacter salexigens (strain ATCC BAA-138 / DSM 3043 / CIP 106854 / NCIMB 13768 / 1H11)</name>
    <dbReference type="NCBI Taxonomy" id="290398"/>
    <lineage>
        <taxon>Bacteria</taxon>
        <taxon>Pseudomonadati</taxon>
        <taxon>Pseudomonadota</taxon>
        <taxon>Gammaproteobacteria</taxon>
        <taxon>Oceanospirillales</taxon>
        <taxon>Halomonadaceae</taxon>
        <taxon>Chromohalobacter</taxon>
    </lineage>
</organism>
<evidence type="ECO:0000255" key="1">
    <source>
        <dbReference type="HAMAP-Rule" id="MF_01351"/>
    </source>
</evidence>
<accession>Q1QST9</accession>
<dbReference type="EC" id="7.1.1.-" evidence="1"/>
<dbReference type="EMBL" id="CP000285">
    <property type="protein sequence ID" value="ABE60469.1"/>
    <property type="molecule type" value="Genomic_DNA"/>
</dbReference>
<dbReference type="RefSeq" id="WP_011508415.1">
    <property type="nucleotide sequence ID" value="NC_007963.1"/>
</dbReference>
<dbReference type="SMR" id="Q1QST9"/>
<dbReference type="STRING" id="290398.Csal_3125"/>
<dbReference type="GeneID" id="95335820"/>
<dbReference type="KEGG" id="csa:Csal_3125"/>
<dbReference type="eggNOG" id="COG1143">
    <property type="taxonomic scope" value="Bacteria"/>
</dbReference>
<dbReference type="HOGENOM" id="CLU_067218_4_3_6"/>
<dbReference type="OrthoDB" id="9808559at2"/>
<dbReference type="Proteomes" id="UP000000239">
    <property type="component" value="Chromosome"/>
</dbReference>
<dbReference type="GO" id="GO:0005886">
    <property type="term" value="C:plasma membrane"/>
    <property type="evidence" value="ECO:0007669"/>
    <property type="project" value="UniProtKB-SubCell"/>
</dbReference>
<dbReference type="GO" id="GO:0051539">
    <property type="term" value="F:4 iron, 4 sulfur cluster binding"/>
    <property type="evidence" value="ECO:0007669"/>
    <property type="project" value="UniProtKB-KW"/>
</dbReference>
<dbReference type="GO" id="GO:0005506">
    <property type="term" value="F:iron ion binding"/>
    <property type="evidence" value="ECO:0007669"/>
    <property type="project" value="UniProtKB-UniRule"/>
</dbReference>
<dbReference type="GO" id="GO:0050136">
    <property type="term" value="F:NADH:ubiquinone reductase (non-electrogenic) activity"/>
    <property type="evidence" value="ECO:0007669"/>
    <property type="project" value="UniProtKB-UniRule"/>
</dbReference>
<dbReference type="GO" id="GO:0048038">
    <property type="term" value="F:quinone binding"/>
    <property type="evidence" value="ECO:0007669"/>
    <property type="project" value="UniProtKB-KW"/>
</dbReference>
<dbReference type="GO" id="GO:0009060">
    <property type="term" value="P:aerobic respiration"/>
    <property type="evidence" value="ECO:0007669"/>
    <property type="project" value="TreeGrafter"/>
</dbReference>
<dbReference type="FunFam" id="3.30.70.3270:FF:000002">
    <property type="entry name" value="NADH-quinone oxidoreductase subunit I"/>
    <property type="match status" value="1"/>
</dbReference>
<dbReference type="Gene3D" id="3.30.70.3270">
    <property type="match status" value="1"/>
</dbReference>
<dbReference type="HAMAP" id="MF_01351">
    <property type="entry name" value="NDH1_NuoI"/>
    <property type="match status" value="1"/>
</dbReference>
<dbReference type="InterPro" id="IPR017896">
    <property type="entry name" value="4Fe4S_Fe-S-bd"/>
</dbReference>
<dbReference type="InterPro" id="IPR017900">
    <property type="entry name" value="4Fe4S_Fe_S_CS"/>
</dbReference>
<dbReference type="InterPro" id="IPR010226">
    <property type="entry name" value="NADH_quinone_OxRdtase_chainI"/>
</dbReference>
<dbReference type="NCBIfam" id="TIGR01971">
    <property type="entry name" value="NuoI"/>
    <property type="match status" value="1"/>
</dbReference>
<dbReference type="NCBIfam" id="NF004536">
    <property type="entry name" value="PRK05888.1-1"/>
    <property type="match status" value="1"/>
</dbReference>
<dbReference type="PANTHER" id="PTHR10849:SF20">
    <property type="entry name" value="NADH DEHYDROGENASE [UBIQUINONE] IRON-SULFUR PROTEIN 8, MITOCHONDRIAL"/>
    <property type="match status" value="1"/>
</dbReference>
<dbReference type="PANTHER" id="PTHR10849">
    <property type="entry name" value="NADH DEHYDROGENASE UBIQUINONE IRON-SULFUR PROTEIN 8, MITOCHONDRIAL"/>
    <property type="match status" value="1"/>
</dbReference>
<dbReference type="Pfam" id="PF12838">
    <property type="entry name" value="Fer4_7"/>
    <property type="match status" value="1"/>
</dbReference>
<dbReference type="SUPFAM" id="SSF54862">
    <property type="entry name" value="4Fe-4S ferredoxins"/>
    <property type="match status" value="1"/>
</dbReference>
<dbReference type="PROSITE" id="PS00198">
    <property type="entry name" value="4FE4S_FER_1"/>
    <property type="match status" value="2"/>
</dbReference>
<dbReference type="PROSITE" id="PS51379">
    <property type="entry name" value="4FE4S_FER_2"/>
    <property type="match status" value="2"/>
</dbReference>
<protein>
    <recommendedName>
        <fullName evidence="1">NADH-quinone oxidoreductase subunit I</fullName>
        <ecNumber evidence="1">7.1.1.-</ecNumber>
    </recommendedName>
    <alternativeName>
        <fullName evidence="1">NADH dehydrogenase I subunit I</fullName>
    </alternativeName>
    <alternativeName>
        <fullName evidence="1">NDH-1 subunit I</fullName>
    </alternativeName>
</protein>
<keyword id="KW-0004">4Fe-4S</keyword>
<keyword id="KW-0997">Cell inner membrane</keyword>
<keyword id="KW-1003">Cell membrane</keyword>
<keyword id="KW-0408">Iron</keyword>
<keyword id="KW-0411">Iron-sulfur</keyword>
<keyword id="KW-0472">Membrane</keyword>
<keyword id="KW-0479">Metal-binding</keyword>
<keyword id="KW-0520">NAD</keyword>
<keyword id="KW-0874">Quinone</keyword>
<keyword id="KW-1185">Reference proteome</keyword>
<keyword id="KW-0677">Repeat</keyword>
<keyword id="KW-1278">Translocase</keyword>
<keyword id="KW-0830">Ubiquinone</keyword>
<name>NUOI_CHRSD</name>
<reference key="1">
    <citation type="journal article" date="2011" name="Stand. Genomic Sci.">
        <title>Complete genome sequence of the halophilic and highly halotolerant Chromohalobacter salexigens type strain (1H11(T)).</title>
        <authorList>
            <person name="Copeland A."/>
            <person name="O'Connor K."/>
            <person name="Lucas S."/>
            <person name="Lapidus A."/>
            <person name="Berry K.W."/>
            <person name="Detter J.C."/>
            <person name="Del Rio T.G."/>
            <person name="Hammon N."/>
            <person name="Dalin E."/>
            <person name="Tice H."/>
            <person name="Pitluck S."/>
            <person name="Bruce D."/>
            <person name="Goodwin L."/>
            <person name="Han C."/>
            <person name="Tapia R."/>
            <person name="Saunders E."/>
            <person name="Schmutz J."/>
            <person name="Brettin T."/>
            <person name="Larimer F."/>
            <person name="Land M."/>
            <person name="Hauser L."/>
            <person name="Vargas C."/>
            <person name="Nieto J.J."/>
            <person name="Kyrpides N.C."/>
            <person name="Ivanova N."/>
            <person name="Goker M."/>
            <person name="Klenk H.P."/>
            <person name="Csonka L.N."/>
            <person name="Woyke T."/>
        </authorList>
    </citation>
    <scope>NUCLEOTIDE SEQUENCE [LARGE SCALE GENOMIC DNA]</scope>
    <source>
        <strain>ATCC BAA-138 / DSM 3043 / CIP 106854 / NCIMB 13768 / 1H11</strain>
    </source>
</reference>
<feature type="chain" id="PRO_0000245703" description="NADH-quinone oxidoreductase subunit I">
    <location>
        <begin position="1"/>
        <end position="179"/>
    </location>
</feature>
<feature type="domain" description="4Fe-4S ferredoxin-type 1" evidence="1">
    <location>
        <begin position="49"/>
        <end position="79"/>
    </location>
</feature>
<feature type="domain" description="4Fe-4S ferredoxin-type 2" evidence="1">
    <location>
        <begin position="89"/>
        <end position="118"/>
    </location>
</feature>
<feature type="binding site" evidence="1">
    <location>
        <position position="59"/>
    </location>
    <ligand>
        <name>[4Fe-4S] cluster</name>
        <dbReference type="ChEBI" id="CHEBI:49883"/>
        <label>1</label>
    </ligand>
</feature>
<feature type="binding site" evidence="1">
    <location>
        <position position="62"/>
    </location>
    <ligand>
        <name>[4Fe-4S] cluster</name>
        <dbReference type="ChEBI" id="CHEBI:49883"/>
        <label>1</label>
    </ligand>
</feature>
<feature type="binding site" evidence="1">
    <location>
        <position position="65"/>
    </location>
    <ligand>
        <name>[4Fe-4S] cluster</name>
        <dbReference type="ChEBI" id="CHEBI:49883"/>
        <label>1</label>
    </ligand>
</feature>
<feature type="binding site" evidence="1">
    <location>
        <position position="69"/>
    </location>
    <ligand>
        <name>[4Fe-4S] cluster</name>
        <dbReference type="ChEBI" id="CHEBI:49883"/>
        <label>2</label>
    </ligand>
</feature>
<feature type="binding site" evidence="1">
    <location>
        <position position="98"/>
    </location>
    <ligand>
        <name>[4Fe-4S] cluster</name>
        <dbReference type="ChEBI" id="CHEBI:49883"/>
        <label>2</label>
    </ligand>
</feature>
<feature type="binding site" evidence="1">
    <location>
        <position position="101"/>
    </location>
    <ligand>
        <name>[4Fe-4S] cluster</name>
        <dbReference type="ChEBI" id="CHEBI:49883"/>
        <label>2</label>
    </ligand>
</feature>
<feature type="binding site" evidence="1">
    <location>
        <position position="104"/>
    </location>
    <ligand>
        <name>[4Fe-4S] cluster</name>
        <dbReference type="ChEBI" id="CHEBI:49883"/>
        <label>2</label>
    </ligand>
</feature>
<feature type="binding site" evidence="1">
    <location>
        <position position="108"/>
    </location>
    <ligand>
        <name>[4Fe-4S] cluster</name>
        <dbReference type="ChEBI" id="CHEBI:49883"/>
        <label>1</label>
    </ligand>
</feature>
<gene>
    <name evidence="1" type="primary">nuoI</name>
    <name type="ordered locus">Csal_3125</name>
</gene>
<proteinExistence type="inferred from homology"/>
<sequence>MIKSLLEGTWSQLRTLGMVFMHAFRKRETLQYPEEPVYLSPRYRGRIVLTRDPDGEERCVACNLCAVACPVACISLQKGERDDGRWYPEFFRINFSRCIFCGLCEEACPTSAIQLTPDFEMSEYRRQELVYEKDDLLISGPGKDHNYNFYRVAGLSIAGKGKGEAQNEAEPIDVKSLMP</sequence>